<sequence length="56" mass="6128">TAEDSRGTQLHRALRKATKLPVSTRCITPGTRCKVPSQCCRGPCKNGRCTPSPSEW</sequence>
<evidence type="ECO:0000250" key="1"/>
<evidence type="ECO:0000255" key="2"/>
<evidence type="ECO:0000305" key="3"/>
<dbReference type="SMR" id="P0CY70"/>
<dbReference type="GO" id="GO:0005576">
    <property type="term" value="C:extracellular region"/>
    <property type="evidence" value="ECO:0007669"/>
    <property type="project" value="UniProtKB-SubCell"/>
</dbReference>
<dbReference type="GO" id="GO:0099106">
    <property type="term" value="F:ion channel regulator activity"/>
    <property type="evidence" value="ECO:0007669"/>
    <property type="project" value="UniProtKB-KW"/>
</dbReference>
<dbReference type="GO" id="GO:0090729">
    <property type="term" value="F:toxin activity"/>
    <property type="evidence" value="ECO:0007669"/>
    <property type="project" value="UniProtKB-KW"/>
</dbReference>
<keyword id="KW-1015">Disulfide bond</keyword>
<keyword id="KW-0872">Ion channel impairing toxin</keyword>
<keyword id="KW-0960">Knottin</keyword>
<keyword id="KW-0528">Neurotoxin</keyword>
<keyword id="KW-0964">Secreted</keyword>
<keyword id="KW-0732">Signal</keyword>
<keyword id="KW-0800">Toxin</keyword>
<feature type="signal peptide" evidence="2">
    <location>
        <begin position="1" status="less than"/>
        <end position="2"/>
    </location>
</feature>
<feature type="propeptide" id="PRO_0000409956" evidence="1">
    <location>
        <begin position="3"/>
        <end position="25"/>
    </location>
</feature>
<feature type="peptide" id="PRO_0000409957" description="Conotoxin Bu12">
    <location>
        <begin position="26"/>
        <end position="56"/>
    </location>
</feature>
<feature type="disulfide bond" evidence="1">
    <location>
        <begin position="26"/>
        <end position="40"/>
    </location>
</feature>
<feature type="disulfide bond" evidence="1">
    <location>
        <begin position="33"/>
        <end position="44"/>
    </location>
</feature>
<feature type="disulfide bond" evidence="1">
    <location>
        <begin position="39"/>
        <end position="49"/>
    </location>
</feature>
<feature type="non-terminal residue">
    <location>
        <position position="1"/>
    </location>
</feature>
<proteinExistence type="evidence at transcript level"/>
<reference key="1">
    <citation type="journal article" date="2011" name="BMC Genomics">
        <title>Characterization of the Conus bullatus genome and its venom-duct transcriptome.</title>
        <authorList>
            <person name="Hu H."/>
            <person name="Bandyopadhyay P.K."/>
            <person name="Olivera B.M."/>
            <person name="Yandell M."/>
        </authorList>
    </citation>
    <scope>NUCLEOTIDE SEQUENCE [MRNA]</scope>
    <source>
        <tissue>Venom duct</tissue>
    </source>
</reference>
<name>O16C_CONBU</name>
<organism>
    <name type="scientific">Conus bullatus</name>
    <name type="common">Bubble cone</name>
    <dbReference type="NCBI Taxonomy" id="89438"/>
    <lineage>
        <taxon>Eukaryota</taxon>
        <taxon>Metazoa</taxon>
        <taxon>Spiralia</taxon>
        <taxon>Lophotrochozoa</taxon>
        <taxon>Mollusca</taxon>
        <taxon>Gastropoda</taxon>
        <taxon>Caenogastropoda</taxon>
        <taxon>Neogastropoda</taxon>
        <taxon>Conoidea</taxon>
        <taxon>Conidae</taxon>
        <taxon>Conus</taxon>
        <taxon>Textilia</taxon>
    </lineage>
</organism>
<comment type="subcellular location">
    <subcellularLocation>
        <location evidence="1">Secreted</location>
    </subcellularLocation>
</comment>
<comment type="tissue specificity">
    <text>Expressed by the venom duct.</text>
</comment>
<comment type="domain">
    <text>The presence of a 'disulfide through disulfide knot' structurally defines this protein as a knottin.</text>
</comment>
<comment type="domain">
    <text>The cysteine framework is VI/VII (C-C-CC-C-C).</text>
</comment>
<comment type="similarity">
    <text evidence="3">Belongs to the conotoxin O1 superfamily.</text>
</comment>
<accession>P0CY70</accession>
<protein>
    <recommendedName>
        <fullName>Conotoxin Bu12</fullName>
    </recommendedName>
</protein>